<reference key="1">
    <citation type="journal article" date="1998" name="Nature">
        <title>The X-linked lymphoproliferative-disease gene product SAP regulates signals induced through the co-receptor SLAM.</title>
        <authorList>
            <person name="Sayos J."/>
            <person name="Wu C."/>
            <person name="Morra M."/>
            <person name="Wang N."/>
            <person name="Zhang X."/>
            <person name="Allen D."/>
            <person name="van Schaik S."/>
            <person name="Notarangelo L."/>
            <person name="Geha R."/>
            <person name="Roncarolo M.G."/>
            <person name="Oettgen H."/>
            <person name="de Vries J.E."/>
            <person name="Aversa G."/>
            <person name="Terhorst C."/>
        </authorList>
    </citation>
    <scope>NUCLEOTIDE SEQUENCE [MRNA] (ISOFORM LONG)</scope>
    <source>
        <strain>BALB/cJ</strain>
    </source>
</reference>
<reference key="2">
    <citation type="submission" date="1998-10" db="EMBL/GenBank/DDBJ databases">
        <title>cDNA sequence of the mouse homolog of the human X-linked lymphoproliferative-disease gene.</title>
        <authorList>
            <person name="Garrity D.B."/>
            <person name="Amemiya C.T."/>
        </authorList>
    </citation>
    <scope>NUCLEOTIDE SEQUENCE (ISOFORMS LONG AND SHORT)</scope>
    <source>
        <strain>C57BL/6J</strain>
    </source>
</reference>
<reference key="3">
    <citation type="journal article" date="2000" name="Immunogenetics">
        <title>Genomic organization and characterization of mouse SAP, the gene that is altered in X-linked lymphoproliferative disease.</title>
        <authorList>
            <person name="Wu C."/>
            <person name="Sayos J."/>
            <person name="Wang N."/>
            <person name="Howie D."/>
            <person name="Coyle A."/>
            <person name="Terhorst C."/>
        </authorList>
    </citation>
    <scope>NUCLEOTIDE SEQUENCE [GENOMIC DNA] (ISOFORM LONG)</scope>
</reference>
<reference key="4">
    <citation type="journal article" date="2009" name="PLoS Biol.">
        <title>Lineage-specific biology revealed by a finished genome assembly of the mouse.</title>
        <authorList>
            <person name="Church D.M."/>
            <person name="Goodstadt L."/>
            <person name="Hillier L.W."/>
            <person name="Zody M.C."/>
            <person name="Goldstein S."/>
            <person name="She X."/>
            <person name="Bult C.J."/>
            <person name="Agarwala R."/>
            <person name="Cherry J.L."/>
            <person name="DiCuccio M."/>
            <person name="Hlavina W."/>
            <person name="Kapustin Y."/>
            <person name="Meric P."/>
            <person name="Maglott D."/>
            <person name="Birtle Z."/>
            <person name="Marques A.C."/>
            <person name="Graves T."/>
            <person name="Zhou S."/>
            <person name="Teague B."/>
            <person name="Potamousis K."/>
            <person name="Churas C."/>
            <person name="Place M."/>
            <person name="Herschleb J."/>
            <person name="Runnheim R."/>
            <person name="Forrest D."/>
            <person name="Amos-Landgraf J."/>
            <person name="Schwartz D.C."/>
            <person name="Cheng Z."/>
            <person name="Lindblad-Toh K."/>
            <person name="Eichler E.E."/>
            <person name="Ponting C.P."/>
        </authorList>
    </citation>
    <scope>NUCLEOTIDE SEQUENCE [LARGE SCALE GENOMIC DNA]</scope>
    <source>
        <strain>C57BL/6J</strain>
    </source>
</reference>
<reference key="5">
    <citation type="journal article" date="2003" name="Nat. Cell Biol.">
        <title>Binding of SAP SH2 domain to FynT SH3 domain reveals a novel mechanism of receptor signalling in immune regulation.</title>
        <authorList>
            <person name="Latour S."/>
            <person name="Roncagalli R."/>
            <person name="Chen R."/>
            <person name="Bakinowski M."/>
            <person name="Shi X."/>
            <person name="Schwartzberg P.L."/>
            <person name="Davidson D."/>
            <person name="Veillette A."/>
        </authorList>
    </citation>
    <scope>INTERACTION WITH FYN</scope>
    <scope>MUTAGENESIS OF ARG-32; PRO-70; 74-LYS-ARG-75; 78-ARG-LYS-79 AND PRO-90</scope>
</reference>
<reference key="6">
    <citation type="journal article" date="2005" name="J. Biol. Chem.">
        <title>SLAM-associated protein as a potential negative regulator in Trk signaling.</title>
        <authorList>
            <person name="Lo K.Y."/>
            <person name="Chin W.H."/>
            <person name="Ng Y.P."/>
            <person name="Cheng A.W."/>
            <person name="Cheung Z.H."/>
            <person name="Ip N.Y."/>
        </authorList>
    </citation>
    <scope>FUNCTION IN NTRK2 SIGNALING</scope>
    <scope>INTERACTION WITH NTRK1; NTRK2 AND NTRK3</scope>
</reference>
<reference key="7">
    <citation type="journal article" date="2009" name="Nat. Immunol.">
        <title>Essential function for SAP family adaptors in the surveillance of hematopoietic cells by natural killer cells.</title>
        <authorList>
            <person name="Dong Z."/>
            <person name="Cruz-Munoz M.E."/>
            <person name="Zhong M.C."/>
            <person name="Chen R."/>
            <person name="Latour S."/>
            <person name="Veillette A."/>
        </authorList>
    </citation>
    <scope>FUNCTION</scope>
</reference>
<reference key="8">
    <citation type="journal article" date="2010" name="J. Immunol.">
        <title>The adapters EAT-2A and -2B are positive regulators of CD244- and CD84-dependent NK cell functions in the C57BL/6 mouse.</title>
        <authorList>
            <person name="Wang N."/>
            <person name="Calpe S."/>
            <person name="Westcott J."/>
            <person name="Castro W."/>
            <person name="Ma C."/>
            <person name="Engel P."/>
            <person name="Schatzle J.D."/>
            <person name="Terhorst C."/>
        </authorList>
    </citation>
    <scope>FUNCTION</scope>
</reference>
<reference key="9">
    <citation type="journal article" date="2011" name="Annu. Rev. Immunol.">
        <title>SLAM family receptors and SAP adaptors in immunity.</title>
        <authorList>
            <person name="Cannons J.L."/>
            <person name="Tangye S.G."/>
            <person name="Schwartzberg P.L."/>
        </authorList>
    </citation>
    <scope>REVIEW</scope>
</reference>
<reference key="10">
    <citation type="journal article" date="2012" name="Immunity">
        <title>The adaptor SAP controls NK cell activation by regulating the enzymes Vav-1 and SHIP-1 and by enhancing conjugates with target cells.</title>
        <authorList>
            <person name="Dong Z."/>
            <person name="Davidson D."/>
            <person name="Perez-Quintero L.A."/>
            <person name="Kurosaki T."/>
            <person name="Swat W."/>
            <person name="Veillette A."/>
        </authorList>
    </citation>
    <scope>FUNCTION</scope>
    <scope>MUTAGENESIS OF ARG-78</scope>
</reference>
<protein>
    <recommendedName>
        <fullName>SH2 domain-containing protein 1A</fullName>
    </recommendedName>
    <alternativeName>
        <fullName>Signaling lymphocytic activation molecule-associated protein</fullName>
        <shortName>SLAM-associated protein</shortName>
    </alternativeName>
    <alternativeName>
        <fullName>T-cell signal transduction molecule SAP</fullName>
    </alternativeName>
</protein>
<feature type="chain" id="PRO_0000097723" description="SH2 domain-containing protein 1A">
    <location>
        <begin position="1"/>
        <end position="126"/>
    </location>
</feature>
<feature type="domain" description="SH2" evidence="3">
    <location>
        <begin position="6"/>
        <end position="104"/>
    </location>
</feature>
<feature type="region of interest" description="Interaction with FYN SH3 domain" evidence="5">
    <location>
        <begin position="67"/>
        <end position="92"/>
    </location>
</feature>
<feature type="region of interest" description="Disordered" evidence="4">
    <location>
        <begin position="100"/>
        <end position="126"/>
    </location>
</feature>
<feature type="modified residue" description="N6-acetyllysine" evidence="2">
    <location>
        <position position="89"/>
    </location>
</feature>
<feature type="splice variant" id="VSP_004391" description="In isoform Short." evidence="10">
    <location>
        <begin position="44"/>
        <end position="46"/>
    </location>
</feature>
<feature type="mutagenesis site" description="No effect on interaction with FYN SH3 domain." evidence="5">
    <original>R</original>
    <variation>K</variation>
    <location>
        <position position="32"/>
    </location>
</feature>
<feature type="mutagenesis site" description="No effect on interaction with FYN SH3 domain." evidence="5">
    <original>T</original>
    <variation>I</variation>
    <location>
        <position position="68"/>
    </location>
</feature>
<feature type="mutagenesis site" description="No effect on interaction with FYN SH3 domain." evidence="5">
    <original>P</original>
    <variation>A</variation>
    <location>
        <position position="70"/>
    </location>
</feature>
<feature type="mutagenesis site" description="Disrupts interaction with FYN SH3 domain." evidence="5">
    <original>KR</original>
    <variation>AA</variation>
    <location>
        <begin position="74"/>
        <end position="75"/>
    </location>
</feature>
<feature type="mutagenesis site" description="Disrupts interaction with FYN SH3 domain." evidence="5">
    <original>RK</original>
    <variation>AA</variation>
    <location>
        <begin position="78"/>
        <end position="79"/>
    </location>
</feature>
<feature type="mutagenesis site" description="No effect on NK cell development, impairs promotion of NK cell cytotoxicity and IFN-gamma production in response to hematopoietic cells." evidence="9">
    <original>R</original>
    <variation>A</variation>
    <location>
        <position position="78"/>
    </location>
</feature>
<feature type="mutagenesis site" description="No effect on interaction with FYN SH3 domain." evidence="5">
    <original>P</original>
    <variation>K</variation>
    <location>
        <position position="90"/>
    </location>
</feature>
<organism>
    <name type="scientific">Mus musculus</name>
    <name type="common">Mouse</name>
    <dbReference type="NCBI Taxonomy" id="10090"/>
    <lineage>
        <taxon>Eukaryota</taxon>
        <taxon>Metazoa</taxon>
        <taxon>Chordata</taxon>
        <taxon>Craniata</taxon>
        <taxon>Vertebrata</taxon>
        <taxon>Euteleostomi</taxon>
        <taxon>Mammalia</taxon>
        <taxon>Eutheria</taxon>
        <taxon>Euarchontoglires</taxon>
        <taxon>Glires</taxon>
        <taxon>Rodentia</taxon>
        <taxon>Myomorpha</taxon>
        <taxon>Muroidea</taxon>
        <taxon>Muridae</taxon>
        <taxon>Murinae</taxon>
        <taxon>Mus</taxon>
        <taxon>Mus</taxon>
    </lineage>
</organism>
<sequence length="126" mass="13904">MDAVTVYHGKISRETGEKLLLATGLDGSYLLRDSESVPGVYCLCVLYQGYIYTYRVSQTETGSWSAETAPGVHKRFFRKVKNLISAFQKPDQGIVTPLQYPVEKSSGRGPQAPTGRRDSDICLNAP</sequence>
<name>SH21A_MOUSE</name>
<dbReference type="EMBL" id="AF072903">
    <property type="protein sequence ID" value="AAC62629.1"/>
    <property type="molecule type" value="mRNA"/>
</dbReference>
<dbReference type="EMBL" id="AF097633">
    <property type="protein sequence ID" value="AAC95999.1"/>
    <property type="molecule type" value="mRNA"/>
</dbReference>
<dbReference type="EMBL" id="AF097632">
    <property type="protein sequence ID" value="AAC95998.1"/>
    <property type="molecule type" value="mRNA"/>
</dbReference>
<dbReference type="EMBL" id="AF154505">
    <property type="protein sequence ID" value="AAF14526.1"/>
    <property type="molecule type" value="Genomic_DNA"/>
</dbReference>
<dbReference type="EMBL" id="AF154503">
    <property type="protein sequence ID" value="AAF14526.1"/>
    <property type="status" value="JOINED"/>
    <property type="molecule type" value="Genomic_DNA"/>
</dbReference>
<dbReference type="EMBL" id="AF154504">
    <property type="protein sequence ID" value="AAF14526.1"/>
    <property type="status" value="JOINED"/>
    <property type="molecule type" value="Genomic_DNA"/>
</dbReference>
<dbReference type="EMBL" id="AL831716">
    <property type="status" value="NOT_ANNOTATED_CDS"/>
    <property type="molecule type" value="Genomic_DNA"/>
</dbReference>
<dbReference type="CCDS" id="CCDS30099.1">
    <molecule id="O88890-1"/>
</dbReference>
<dbReference type="CCDS" id="CCDS85770.1">
    <molecule id="O88890-2"/>
</dbReference>
<dbReference type="RefSeq" id="NP_001300617.1">
    <property type="nucleotide sequence ID" value="NM_001313688.1"/>
</dbReference>
<dbReference type="RefSeq" id="NP_001300618.1">
    <molecule id="O88890-2"/>
    <property type="nucleotide sequence ID" value="NM_001313689.1"/>
</dbReference>
<dbReference type="RefSeq" id="NP_001300620.1">
    <property type="nucleotide sequence ID" value="NM_001313691.1"/>
</dbReference>
<dbReference type="RefSeq" id="NP_035494.1">
    <molecule id="O88890-1"/>
    <property type="nucleotide sequence ID" value="NM_011364.4"/>
</dbReference>
<dbReference type="SMR" id="O88890"/>
<dbReference type="CORUM" id="O88890"/>
<dbReference type="FunCoup" id="O88890">
    <property type="interactions" value="791"/>
</dbReference>
<dbReference type="IntAct" id="O88890">
    <property type="interactions" value="3"/>
</dbReference>
<dbReference type="MINT" id="O88890"/>
<dbReference type="STRING" id="10090.ENSMUSP00000141070"/>
<dbReference type="iPTMnet" id="O88890"/>
<dbReference type="PhosphoSitePlus" id="O88890"/>
<dbReference type="jPOST" id="O88890"/>
<dbReference type="PaxDb" id="10090-ENSMUSP00000005839"/>
<dbReference type="ProteomicsDB" id="261017">
    <molecule id="O88890-1"/>
</dbReference>
<dbReference type="ProteomicsDB" id="261018">
    <molecule id="O88890-2"/>
</dbReference>
<dbReference type="Antibodypedia" id="30053">
    <property type="antibodies" value="459 antibodies from 42 providers"/>
</dbReference>
<dbReference type="DNASU" id="20400"/>
<dbReference type="Ensembl" id="ENSMUST00000005839.11">
    <molecule id="O88890-1"/>
    <property type="protein sequence ID" value="ENSMUSP00000005839.5"/>
    <property type="gene ID" value="ENSMUSG00000005696.12"/>
</dbReference>
<dbReference type="Ensembl" id="ENSMUST00000115070.8">
    <molecule id="O88890-2"/>
    <property type="protein sequence ID" value="ENSMUSP00000110722.2"/>
    <property type="gene ID" value="ENSMUSG00000005696.12"/>
</dbReference>
<dbReference type="Ensembl" id="ENSMUST00000189753.7">
    <molecule id="O88890-1"/>
    <property type="protein sequence ID" value="ENSMUSP00000141070.2"/>
    <property type="gene ID" value="ENSMUSG00000005696.12"/>
</dbReference>
<dbReference type="GeneID" id="20400"/>
<dbReference type="KEGG" id="mmu:20400"/>
<dbReference type="UCSC" id="uc009tbb.1">
    <molecule id="O88890-1"/>
    <property type="organism name" value="mouse"/>
</dbReference>
<dbReference type="AGR" id="MGI:1328352"/>
<dbReference type="CTD" id="4068"/>
<dbReference type="MGI" id="MGI:1328352">
    <property type="gene designation" value="Sh2d1a"/>
</dbReference>
<dbReference type="VEuPathDB" id="HostDB:ENSMUSG00000005696"/>
<dbReference type="eggNOG" id="KOG0565">
    <property type="taxonomic scope" value="Eukaryota"/>
</dbReference>
<dbReference type="GeneTree" id="ENSGT00940000155920"/>
<dbReference type="HOGENOM" id="CLU_125532_1_0_1"/>
<dbReference type="InParanoid" id="O88890"/>
<dbReference type="OMA" id="YSPGRNE"/>
<dbReference type="OrthoDB" id="10053436at2759"/>
<dbReference type="PhylomeDB" id="O88890"/>
<dbReference type="TreeFam" id="TF343096"/>
<dbReference type="BioGRID-ORCS" id="20400">
    <property type="hits" value="1 hit in 78 CRISPR screens"/>
</dbReference>
<dbReference type="ChiTaRS" id="Sh2d1a">
    <property type="organism name" value="mouse"/>
</dbReference>
<dbReference type="PRO" id="PR:O88890"/>
<dbReference type="Proteomes" id="UP000000589">
    <property type="component" value="Chromosome X"/>
</dbReference>
<dbReference type="RNAct" id="O88890">
    <property type="molecule type" value="protein"/>
</dbReference>
<dbReference type="Bgee" id="ENSMUSG00000005696">
    <property type="expression patterns" value="Expressed in thymus and 45 other cell types or tissues"/>
</dbReference>
<dbReference type="ExpressionAtlas" id="O88890">
    <property type="expression patterns" value="baseline and differential"/>
</dbReference>
<dbReference type="GO" id="GO:0005737">
    <property type="term" value="C:cytoplasm"/>
    <property type="evidence" value="ECO:0007669"/>
    <property type="project" value="UniProtKB-SubCell"/>
</dbReference>
<dbReference type="GO" id="GO:0030674">
    <property type="term" value="F:protein-macromolecule adaptor activity"/>
    <property type="evidence" value="ECO:0007669"/>
    <property type="project" value="Ensembl"/>
</dbReference>
<dbReference type="GO" id="GO:0002250">
    <property type="term" value="P:adaptive immune response"/>
    <property type="evidence" value="ECO:0007669"/>
    <property type="project" value="UniProtKB-KW"/>
</dbReference>
<dbReference type="GO" id="GO:0007267">
    <property type="term" value="P:cell-cell signaling"/>
    <property type="evidence" value="ECO:0007669"/>
    <property type="project" value="InterPro"/>
</dbReference>
<dbReference type="GO" id="GO:0006968">
    <property type="term" value="P:cellular defense response"/>
    <property type="evidence" value="ECO:0007669"/>
    <property type="project" value="InterPro"/>
</dbReference>
<dbReference type="GO" id="GO:0006959">
    <property type="term" value="P:humoral immune response"/>
    <property type="evidence" value="ECO:0000315"/>
    <property type="project" value="MGI"/>
</dbReference>
<dbReference type="GO" id="GO:0030101">
    <property type="term" value="P:natural killer cell activation"/>
    <property type="evidence" value="ECO:0007669"/>
    <property type="project" value="Ensembl"/>
</dbReference>
<dbReference type="GO" id="GO:0042267">
    <property type="term" value="P:natural killer cell mediated cytotoxicity"/>
    <property type="evidence" value="ECO:0000315"/>
    <property type="project" value="MGI"/>
</dbReference>
<dbReference type="GO" id="GO:0050860">
    <property type="term" value="P:negative regulation of T cell receptor signaling pathway"/>
    <property type="evidence" value="ECO:0007669"/>
    <property type="project" value="Ensembl"/>
</dbReference>
<dbReference type="GO" id="GO:0045954">
    <property type="term" value="P:positive regulation of natural killer cell mediated cytotoxicity"/>
    <property type="evidence" value="ECO:0000315"/>
    <property type="project" value="MGI"/>
</dbReference>
<dbReference type="CDD" id="cd10400">
    <property type="entry name" value="SH2_SAP1a"/>
    <property type="match status" value="1"/>
</dbReference>
<dbReference type="FunFam" id="3.30.505.10:FF:000062">
    <property type="entry name" value="SH2 domain-containing protein 1A"/>
    <property type="match status" value="1"/>
</dbReference>
<dbReference type="Gene3D" id="3.30.505.10">
    <property type="entry name" value="SH2 domain"/>
    <property type="match status" value="1"/>
</dbReference>
<dbReference type="InterPro" id="IPR000980">
    <property type="entry name" value="SH2"/>
</dbReference>
<dbReference type="InterPro" id="IPR036860">
    <property type="entry name" value="SH2_dom_sf"/>
</dbReference>
<dbReference type="InterPro" id="IPR017289">
    <property type="entry name" value="SH2_prot_1A"/>
</dbReference>
<dbReference type="InterPro" id="IPR035876">
    <property type="entry name" value="SH2D1A_SH2"/>
</dbReference>
<dbReference type="PANTHER" id="PTHR46051:SF1">
    <property type="entry name" value="INOSITOL POLYPHOSPHATE-RELATED PHOSPHATASE DOMAIN-CONTAINING PROTEIN"/>
    <property type="match status" value="1"/>
</dbReference>
<dbReference type="PANTHER" id="PTHR46051">
    <property type="entry name" value="SH2 DOMAIN-CONTAINING PROTEIN"/>
    <property type="match status" value="1"/>
</dbReference>
<dbReference type="Pfam" id="PF00017">
    <property type="entry name" value="SH2"/>
    <property type="match status" value="1"/>
</dbReference>
<dbReference type="PIRSF" id="PIRSF037828">
    <property type="entry name" value="SH2_p1A"/>
    <property type="match status" value="1"/>
</dbReference>
<dbReference type="PRINTS" id="PR00401">
    <property type="entry name" value="SH2DOMAIN"/>
</dbReference>
<dbReference type="SMART" id="SM00252">
    <property type="entry name" value="SH2"/>
    <property type="match status" value="1"/>
</dbReference>
<dbReference type="SUPFAM" id="SSF55550">
    <property type="entry name" value="SH2 domain"/>
    <property type="match status" value="1"/>
</dbReference>
<dbReference type="PROSITE" id="PS50001">
    <property type="entry name" value="SH2"/>
    <property type="match status" value="1"/>
</dbReference>
<accession>O88890</accession>
<accession>A2ANL8</accession>
<accession>Q9QWV6</accession>
<evidence type="ECO:0000250" key="1">
    <source>
        <dbReference type="UniProtKB" id="B2RZ59"/>
    </source>
</evidence>
<evidence type="ECO:0000250" key="2">
    <source>
        <dbReference type="UniProtKB" id="O60880"/>
    </source>
</evidence>
<evidence type="ECO:0000255" key="3">
    <source>
        <dbReference type="PROSITE-ProRule" id="PRU00191"/>
    </source>
</evidence>
<evidence type="ECO:0000256" key="4">
    <source>
        <dbReference type="SAM" id="MobiDB-lite"/>
    </source>
</evidence>
<evidence type="ECO:0000269" key="5">
    <source>
    </source>
</evidence>
<evidence type="ECO:0000269" key="6">
    <source>
    </source>
</evidence>
<evidence type="ECO:0000269" key="7">
    <source>
    </source>
</evidence>
<evidence type="ECO:0000269" key="8">
    <source>
    </source>
</evidence>
<evidence type="ECO:0000269" key="9">
    <source>
    </source>
</evidence>
<evidence type="ECO:0000305" key="10"/>
<evidence type="ECO:0000305" key="11">
    <source>
    </source>
</evidence>
<proteinExistence type="evidence at protein level"/>
<comment type="function">
    <text evidence="1 2 6 7 8 9 11">Cytoplasmic adapter regulating receptors of the signaling lymphocytic activation molecule (SLAM) family such as SLAMF1, CD244, LY9, CD84, SLAMF6 and SLAMF7. In SLAM signaling seems to cooperate with SH2D1B/EAT-2. Initially it has been proposed that association with SLAMF1 prevents SLAMF1 binding to inhibitory effectors including INPP5D/SHIP1 and PTPN11/SHP-2. However, by simultaneous interactions, recruits FYN which subsequently phosphorylates and activates SLAMF1 (By similarity). Positively regulates CD244/2B4- and CD84-mediated natural killer (NK) cell functions (PubMed:22683124). Can also promote CD48-, SLAMF6 -, LY9-, and SLAMF7-mediated NK cell activation (PubMed:19648922). In the context of NK cell-mediated cytotoxicity enhances conjugate formation with target cells (PubMed:22683124). May also regulate the activity of the neurotrophin receptors NTRK1, NTRK2 and NTRK3.</text>
</comment>
<comment type="subunit">
    <text evidence="1 2 6">Interacts with CD84, CD244, LY9, SLAMF1 and FYN (By similarity). Interacts with NTRK1, NTRK2 and NTRK3.</text>
</comment>
<comment type="interaction">
    <interactant intactId="EBI-7910438">
        <id>O88890</id>
    </interactant>
    <interactant intactId="EBI-7910086">
        <id>Q9QUM4</id>
        <label>Slamf1</label>
    </interactant>
    <organismsDiffer>false</organismsDiffer>
    <experiments>3</experiments>
</comment>
<comment type="subcellular location">
    <subcellularLocation>
        <location evidence="10">Cytoplasm</location>
    </subcellularLocation>
</comment>
<comment type="alternative products">
    <event type="alternative splicing"/>
    <isoform>
        <id>O88890-1</id>
        <name>Long</name>
        <sequence type="displayed"/>
    </isoform>
    <isoform>
        <id>O88890-2</id>
        <name>Short</name>
        <sequence type="described" ref="VSP_004391"/>
    </isoform>
</comment>
<comment type="tissue specificity">
    <text>T-cells.</text>
</comment>
<gene>
    <name type="primary">Sh2d1a</name>
    <name type="synonym">Xlp</name>
</gene>
<keyword id="KW-0007">Acetylation</keyword>
<keyword id="KW-1064">Adaptive immunity</keyword>
<keyword id="KW-0025">Alternative splicing</keyword>
<keyword id="KW-0963">Cytoplasm</keyword>
<keyword id="KW-0391">Immunity</keyword>
<keyword id="KW-0399">Innate immunity</keyword>
<keyword id="KW-1185">Reference proteome</keyword>
<keyword id="KW-0727">SH2 domain</keyword>